<sequence>MRGHDRINNCLPEELILEIFRRLESKPNRDACSLVCKRWLSLERFSRTTLRIGASFSPDDFISLLSRRFLYITSIHVDERISVSLPSLSPSPKRKRGRDSSSPSSSKRKKLTDKTHSGAENVESSSLTDTGLTALANGFPRIENLSLIWCPNVSSVGLCSLAQKCTSLKSLDLQGCYVGDQGLAAVGKFCKQLEELNLRFCEGLTDVGVIDLVVGCSKSLKSIGVAASAKITDLSLEAVGSHCKLLEVLYLDSEYIHDKGLIAVAQGCHRLKNLKLQCVSVTDVAFAAVGELCTSLERLALYSFQHFTDKGMRAIGKGSKKLKDLTLSDCYFVSCKGLEAIAHGCKELERVEINGCHNIGTRGIEAIGKSCPRLKELALLYCQRIGNSALQEIGKGCKSLEILHLVDCSGIGDIAMCSIAKGCRNLKKLHIRRCYEIGNKGIISIGKHCKSLTELSLRFCDKVGNKALIAIGKGCSLQQLNVSGCNQISDAGITAIARGCPQLTHLDISVLQNIGDMPLAELGEGCPMLKDLVLSHCHHITDNGLNHLVQKCKLLETCHMVYCPGITSAGVATVVSSCPHIKKVLIEKWKVTERTTRRAGSVISYLCMDL</sequence>
<feature type="chain" id="PRO_0000365172" description="F-box/LRR-repeat protein 4">
    <location>
        <begin position="1"/>
        <end position="610"/>
    </location>
</feature>
<feature type="domain" description="F-box">
    <location>
        <begin position="5"/>
        <end position="52"/>
    </location>
</feature>
<feature type="repeat" description="LRR 1">
    <location>
        <begin position="53"/>
        <end position="79"/>
    </location>
</feature>
<feature type="repeat" description="LRR 2">
    <location>
        <begin position="124"/>
        <end position="149"/>
    </location>
</feature>
<feature type="repeat" description="LRR 3">
    <location>
        <begin position="150"/>
        <end position="175"/>
    </location>
</feature>
<feature type="repeat" description="LRR 4">
    <location>
        <begin position="178"/>
        <end position="200"/>
    </location>
</feature>
<feature type="repeat" description="LRR 5">
    <location>
        <begin position="201"/>
        <end position="227"/>
    </location>
</feature>
<feature type="repeat" description="LRR 6">
    <location>
        <begin position="228"/>
        <end position="253"/>
    </location>
</feature>
<feature type="repeat" description="LRR 7">
    <location>
        <begin position="256"/>
        <end position="277"/>
    </location>
</feature>
<feature type="repeat" description="LRR 8">
    <location>
        <begin position="278"/>
        <end position="303"/>
    </location>
</feature>
<feature type="repeat" description="LRR 9">
    <location>
        <begin position="304"/>
        <end position="329"/>
    </location>
</feature>
<feature type="repeat" description="LRR 10">
    <location>
        <begin position="330"/>
        <end position="355"/>
    </location>
</feature>
<feature type="repeat" description="LRR 11">
    <location>
        <begin position="356"/>
        <end position="381"/>
    </location>
</feature>
<feature type="repeat" description="LRR 12">
    <location>
        <begin position="382"/>
        <end position="407"/>
    </location>
</feature>
<feature type="repeat" description="LRR 13">
    <location>
        <begin position="408"/>
        <end position="433"/>
    </location>
</feature>
<feature type="repeat" description="LRR 14">
    <location>
        <begin position="434"/>
        <end position="459"/>
    </location>
</feature>
<feature type="repeat" description="LRR 15">
    <location>
        <begin position="460"/>
        <end position="484"/>
    </location>
</feature>
<feature type="repeat" description="LRR 16">
    <location>
        <begin position="485"/>
        <end position="510"/>
    </location>
</feature>
<feature type="repeat" description="LRR 17">
    <location>
        <begin position="511"/>
        <end position="536"/>
    </location>
</feature>
<feature type="repeat" description="LRR 18">
    <location>
        <begin position="537"/>
        <end position="562"/>
    </location>
</feature>
<feature type="repeat" description="LRR 19">
    <location>
        <begin position="563"/>
        <end position="588"/>
    </location>
</feature>
<feature type="region of interest" description="Disordered" evidence="1">
    <location>
        <begin position="88"/>
        <end position="125"/>
    </location>
</feature>
<feature type="sequence conflict" description="In Ref. 5; AAM60829." evidence="2" ref="5">
    <original>Y</original>
    <variation>H</variation>
    <location>
        <position position="71"/>
    </location>
</feature>
<feature type="sequence conflict" description="In Ref. 5; AAM60829." evidence="2" ref="5">
    <original>H</original>
    <variation>Q</variation>
    <location>
        <position position="116"/>
    </location>
</feature>
<feature type="sequence conflict" description="In Ref. 5; AAM60829." evidence="2" ref="5">
    <original>N</original>
    <variation>D</variation>
    <location>
        <position position="137"/>
    </location>
</feature>
<feature type="sequence conflict" description="In Ref. 5; AAM60829." evidence="2" ref="5">
    <original>V</original>
    <variation>A</variation>
    <location>
        <position position="213"/>
    </location>
</feature>
<feature type="sequence conflict" description="In Ref. 5; AAM60829." evidence="2" ref="5">
    <original>H</original>
    <variation>N</variation>
    <location>
        <position position="269"/>
    </location>
</feature>
<feature type="sequence conflict" description="In Ref. 5; AAM60829." evidence="2" ref="5">
    <original>V</original>
    <variation>I</variation>
    <location>
        <position position="463"/>
    </location>
</feature>
<gene>
    <name type="primary">FBL4</name>
    <name type="ordered locus">At4g15475</name>
    <name type="ORF">dl3775w</name>
    <name type="ORF">FCAALL.58</name>
</gene>
<proteinExistence type="evidence at transcript level"/>
<comment type="sequence caution" evidence="2">
    <conflict type="erroneous gene model prediction">
        <sequence resource="EMBL-CDS" id="CAB10325"/>
    </conflict>
    <text>The predicted gene At4g15470 has been split into 2 genes: At4g15470 and At4g15475.</text>
</comment>
<comment type="sequence caution" evidence="2">
    <conflict type="erroneous gene model prediction">
        <sequence resource="EMBL-CDS" id="CAB78589"/>
    </conflict>
    <text>The predicted gene At4g15470 has been split into 2 genes: At4g15470 and At4g15475.</text>
</comment>
<organism>
    <name type="scientific">Arabidopsis thaliana</name>
    <name type="common">Mouse-ear cress</name>
    <dbReference type="NCBI Taxonomy" id="3702"/>
    <lineage>
        <taxon>Eukaryota</taxon>
        <taxon>Viridiplantae</taxon>
        <taxon>Streptophyta</taxon>
        <taxon>Embryophyta</taxon>
        <taxon>Tracheophyta</taxon>
        <taxon>Spermatophyta</taxon>
        <taxon>Magnoliopsida</taxon>
        <taxon>eudicotyledons</taxon>
        <taxon>Gunneridae</taxon>
        <taxon>Pentapetalae</taxon>
        <taxon>rosids</taxon>
        <taxon>malvids</taxon>
        <taxon>Brassicales</taxon>
        <taxon>Brassicaceae</taxon>
        <taxon>Camelineae</taxon>
        <taxon>Arabidopsis</taxon>
    </lineage>
</organism>
<name>FBL4_ARATH</name>
<keyword id="KW-0433">Leucine-rich repeat</keyword>
<keyword id="KW-1185">Reference proteome</keyword>
<keyword id="KW-0677">Repeat</keyword>
<protein>
    <recommendedName>
        <fullName>F-box/LRR-repeat protein 4</fullName>
        <shortName>AtFBL4</shortName>
    </recommendedName>
</protein>
<dbReference type="EMBL" id="Z97339">
    <property type="protein sequence ID" value="CAB10325.1"/>
    <property type="status" value="ALT_SEQ"/>
    <property type="molecule type" value="Genomic_DNA"/>
</dbReference>
<dbReference type="EMBL" id="AL161541">
    <property type="protein sequence ID" value="CAB78589.1"/>
    <property type="status" value="ALT_SEQ"/>
    <property type="molecule type" value="Genomic_DNA"/>
</dbReference>
<dbReference type="EMBL" id="CP002687">
    <property type="protein sequence ID" value="AEE83608.1"/>
    <property type="molecule type" value="Genomic_DNA"/>
</dbReference>
<dbReference type="EMBL" id="AF360328">
    <property type="protein sequence ID" value="AAK26038.1"/>
    <property type="molecule type" value="mRNA"/>
</dbReference>
<dbReference type="EMBL" id="AF361808">
    <property type="protein sequence ID" value="AAK32821.1"/>
    <property type="molecule type" value="mRNA"/>
</dbReference>
<dbReference type="EMBL" id="AY056338">
    <property type="protein sequence ID" value="AAL07187.1"/>
    <property type="molecule type" value="mRNA"/>
</dbReference>
<dbReference type="EMBL" id="AY084229">
    <property type="protein sequence ID" value="AAM60829.1"/>
    <property type="molecule type" value="mRNA"/>
</dbReference>
<dbReference type="RefSeq" id="NP_567467.1">
    <property type="nucleotide sequence ID" value="NM_117637.5"/>
</dbReference>
<dbReference type="SMR" id="Q9C5D2"/>
<dbReference type="FunCoup" id="Q9C5D2">
    <property type="interactions" value="1446"/>
</dbReference>
<dbReference type="STRING" id="3702.Q9C5D2"/>
<dbReference type="PaxDb" id="3702-AT4G15475.1"/>
<dbReference type="ProteomicsDB" id="222575"/>
<dbReference type="EnsemblPlants" id="AT4G15475.1">
    <property type="protein sequence ID" value="AT4G15475.1"/>
    <property type="gene ID" value="AT4G15475"/>
</dbReference>
<dbReference type="GeneID" id="827219"/>
<dbReference type="Gramene" id="AT4G15475.1">
    <property type="protein sequence ID" value="AT4G15475.1"/>
    <property type="gene ID" value="AT4G15475"/>
</dbReference>
<dbReference type="KEGG" id="ath:AT4G15475"/>
<dbReference type="Araport" id="AT4G15475"/>
<dbReference type="TAIR" id="AT4G15475">
    <property type="gene designation" value="RAD7B"/>
</dbReference>
<dbReference type="eggNOG" id="KOG1947">
    <property type="taxonomic scope" value="Eukaryota"/>
</dbReference>
<dbReference type="HOGENOM" id="CLU_016072_3_0_1"/>
<dbReference type="InParanoid" id="Q9C5D2"/>
<dbReference type="OMA" id="CPELEWI"/>
<dbReference type="PhylomeDB" id="Q9C5D2"/>
<dbReference type="PRO" id="PR:Q9C5D2"/>
<dbReference type="Proteomes" id="UP000006548">
    <property type="component" value="Chromosome 4"/>
</dbReference>
<dbReference type="ExpressionAtlas" id="Q9C5D2">
    <property type="expression patterns" value="baseline and differential"/>
</dbReference>
<dbReference type="GO" id="GO:0006289">
    <property type="term" value="P:nucleotide-excision repair"/>
    <property type="evidence" value="ECO:0000315"/>
    <property type="project" value="TAIR"/>
</dbReference>
<dbReference type="GO" id="GO:0010225">
    <property type="term" value="P:response to UV-C"/>
    <property type="evidence" value="ECO:0000315"/>
    <property type="project" value="TAIR"/>
</dbReference>
<dbReference type="CDD" id="cd22159">
    <property type="entry name" value="F-box_AtTIR1-like"/>
    <property type="match status" value="1"/>
</dbReference>
<dbReference type="FunFam" id="1.20.1280.50:FF:000023">
    <property type="entry name" value="F-box/LRR-repeat protein 4"/>
    <property type="match status" value="1"/>
</dbReference>
<dbReference type="FunFam" id="3.80.10.10:FF:000651">
    <property type="entry name" value="F-box/LRR-repeat protein 4"/>
    <property type="match status" value="1"/>
</dbReference>
<dbReference type="FunFam" id="3.80.10.10:FF:001196">
    <property type="entry name" value="F-box/LRR-repeat protein 4"/>
    <property type="match status" value="1"/>
</dbReference>
<dbReference type="Gene3D" id="1.20.1280.50">
    <property type="match status" value="1"/>
</dbReference>
<dbReference type="Gene3D" id="3.80.10.10">
    <property type="entry name" value="Ribonuclease Inhibitor"/>
    <property type="match status" value="2"/>
</dbReference>
<dbReference type="InterPro" id="IPR036047">
    <property type="entry name" value="F-box-like_dom_sf"/>
</dbReference>
<dbReference type="InterPro" id="IPR001810">
    <property type="entry name" value="F-box_dom"/>
</dbReference>
<dbReference type="InterPro" id="IPR001611">
    <property type="entry name" value="Leu-rich_rpt"/>
</dbReference>
<dbReference type="InterPro" id="IPR006553">
    <property type="entry name" value="Leu-rich_rpt_Cys-con_subtyp"/>
</dbReference>
<dbReference type="InterPro" id="IPR032675">
    <property type="entry name" value="LRR_dom_sf"/>
</dbReference>
<dbReference type="PANTHER" id="PTHR13318:SF95">
    <property type="entry name" value="F-BOX PROTEIN YLR352W"/>
    <property type="match status" value="1"/>
</dbReference>
<dbReference type="PANTHER" id="PTHR13318">
    <property type="entry name" value="PARTNER OF PAIRED, ISOFORM B-RELATED"/>
    <property type="match status" value="1"/>
</dbReference>
<dbReference type="Pfam" id="PF12937">
    <property type="entry name" value="F-box-like"/>
    <property type="match status" value="1"/>
</dbReference>
<dbReference type="Pfam" id="PF13516">
    <property type="entry name" value="LRR_6"/>
    <property type="match status" value="6"/>
</dbReference>
<dbReference type="SMART" id="SM00256">
    <property type="entry name" value="FBOX"/>
    <property type="match status" value="1"/>
</dbReference>
<dbReference type="SMART" id="SM00367">
    <property type="entry name" value="LRR_CC"/>
    <property type="match status" value="17"/>
</dbReference>
<dbReference type="SUPFAM" id="SSF81383">
    <property type="entry name" value="F-box domain"/>
    <property type="match status" value="1"/>
</dbReference>
<dbReference type="SUPFAM" id="SSF52047">
    <property type="entry name" value="RNI-like"/>
    <property type="match status" value="1"/>
</dbReference>
<accession>Q9C5D2</accession>
<accession>O23399</accession>
<accession>Q8LGK0</accession>
<evidence type="ECO:0000256" key="1">
    <source>
        <dbReference type="SAM" id="MobiDB-lite"/>
    </source>
</evidence>
<evidence type="ECO:0000305" key="2"/>
<reference key="1">
    <citation type="journal article" date="1998" name="Nature">
        <title>Analysis of 1.9 Mb of contiguous sequence from chromosome 4 of Arabidopsis thaliana.</title>
        <authorList>
            <person name="Bevan M."/>
            <person name="Bancroft I."/>
            <person name="Bent E."/>
            <person name="Love K."/>
            <person name="Goodman H.M."/>
            <person name="Dean C."/>
            <person name="Bergkamp R."/>
            <person name="Dirkse W."/>
            <person name="van Staveren M."/>
            <person name="Stiekema W."/>
            <person name="Drost L."/>
            <person name="Ridley P."/>
            <person name="Hudson S.-A."/>
            <person name="Patel K."/>
            <person name="Murphy G."/>
            <person name="Piffanelli P."/>
            <person name="Wedler H."/>
            <person name="Wedler E."/>
            <person name="Wambutt R."/>
            <person name="Weitzenegger T."/>
            <person name="Pohl T."/>
            <person name="Terryn N."/>
            <person name="Gielen J."/>
            <person name="Villarroel R."/>
            <person name="De Clercq R."/>
            <person name="van Montagu M."/>
            <person name="Lecharny A."/>
            <person name="Aubourg S."/>
            <person name="Gy I."/>
            <person name="Kreis M."/>
            <person name="Lao N."/>
            <person name="Kavanagh T."/>
            <person name="Hempel S."/>
            <person name="Kotter P."/>
            <person name="Entian K.-D."/>
            <person name="Rieger M."/>
            <person name="Schaefer M."/>
            <person name="Funk B."/>
            <person name="Mueller-Auer S."/>
            <person name="Silvey M."/>
            <person name="James R."/>
            <person name="Monfort A."/>
            <person name="Pons A."/>
            <person name="Puigdomenech P."/>
            <person name="Douka A."/>
            <person name="Voukelatou E."/>
            <person name="Milioni D."/>
            <person name="Hatzopoulos P."/>
            <person name="Piravandi E."/>
            <person name="Obermaier B."/>
            <person name="Hilbert H."/>
            <person name="Duesterhoeft A."/>
            <person name="Moores T."/>
            <person name="Jones J.D.G."/>
            <person name="Eneva T."/>
            <person name="Palme K."/>
            <person name="Benes V."/>
            <person name="Rechmann S."/>
            <person name="Ansorge W."/>
            <person name="Cooke R."/>
            <person name="Berger C."/>
            <person name="Delseny M."/>
            <person name="Voet M."/>
            <person name="Volckaert G."/>
            <person name="Mewes H.-W."/>
            <person name="Klosterman S."/>
            <person name="Schueller C."/>
            <person name="Chalwatzis N."/>
        </authorList>
    </citation>
    <scope>NUCLEOTIDE SEQUENCE [LARGE SCALE GENOMIC DNA]</scope>
    <source>
        <strain>cv. Columbia</strain>
    </source>
</reference>
<reference key="2">
    <citation type="journal article" date="1999" name="Nature">
        <title>Sequence and analysis of chromosome 4 of the plant Arabidopsis thaliana.</title>
        <authorList>
            <person name="Mayer K.F.X."/>
            <person name="Schueller C."/>
            <person name="Wambutt R."/>
            <person name="Murphy G."/>
            <person name="Volckaert G."/>
            <person name="Pohl T."/>
            <person name="Duesterhoeft A."/>
            <person name="Stiekema W."/>
            <person name="Entian K.-D."/>
            <person name="Terryn N."/>
            <person name="Harris B."/>
            <person name="Ansorge W."/>
            <person name="Brandt P."/>
            <person name="Grivell L.A."/>
            <person name="Rieger M."/>
            <person name="Weichselgartner M."/>
            <person name="de Simone V."/>
            <person name="Obermaier B."/>
            <person name="Mache R."/>
            <person name="Mueller M."/>
            <person name="Kreis M."/>
            <person name="Delseny M."/>
            <person name="Puigdomenech P."/>
            <person name="Watson M."/>
            <person name="Schmidtheini T."/>
            <person name="Reichert B."/>
            <person name="Portetelle D."/>
            <person name="Perez-Alonso M."/>
            <person name="Boutry M."/>
            <person name="Bancroft I."/>
            <person name="Vos P."/>
            <person name="Hoheisel J."/>
            <person name="Zimmermann W."/>
            <person name="Wedler H."/>
            <person name="Ridley P."/>
            <person name="Langham S.-A."/>
            <person name="McCullagh B."/>
            <person name="Bilham L."/>
            <person name="Robben J."/>
            <person name="van der Schueren J."/>
            <person name="Grymonprez B."/>
            <person name="Chuang Y.-J."/>
            <person name="Vandenbussche F."/>
            <person name="Braeken M."/>
            <person name="Weltjens I."/>
            <person name="Voet M."/>
            <person name="Bastiaens I."/>
            <person name="Aert R."/>
            <person name="Defoor E."/>
            <person name="Weitzenegger T."/>
            <person name="Bothe G."/>
            <person name="Ramsperger U."/>
            <person name="Hilbert H."/>
            <person name="Braun M."/>
            <person name="Holzer E."/>
            <person name="Brandt A."/>
            <person name="Peters S."/>
            <person name="van Staveren M."/>
            <person name="Dirkse W."/>
            <person name="Mooijman P."/>
            <person name="Klein Lankhorst R."/>
            <person name="Rose M."/>
            <person name="Hauf J."/>
            <person name="Koetter P."/>
            <person name="Berneiser S."/>
            <person name="Hempel S."/>
            <person name="Feldpausch M."/>
            <person name="Lamberth S."/>
            <person name="Van den Daele H."/>
            <person name="De Keyser A."/>
            <person name="Buysshaert C."/>
            <person name="Gielen J."/>
            <person name="Villarroel R."/>
            <person name="De Clercq R."/>
            <person name="van Montagu M."/>
            <person name="Rogers J."/>
            <person name="Cronin A."/>
            <person name="Quail M.A."/>
            <person name="Bray-Allen S."/>
            <person name="Clark L."/>
            <person name="Doggett J."/>
            <person name="Hall S."/>
            <person name="Kay M."/>
            <person name="Lennard N."/>
            <person name="McLay K."/>
            <person name="Mayes R."/>
            <person name="Pettett A."/>
            <person name="Rajandream M.A."/>
            <person name="Lyne M."/>
            <person name="Benes V."/>
            <person name="Rechmann S."/>
            <person name="Borkova D."/>
            <person name="Bloecker H."/>
            <person name="Scharfe M."/>
            <person name="Grimm M."/>
            <person name="Loehnert T.-H."/>
            <person name="Dose S."/>
            <person name="de Haan M."/>
            <person name="Maarse A.C."/>
            <person name="Schaefer M."/>
            <person name="Mueller-Auer S."/>
            <person name="Gabel C."/>
            <person name="Fuchs M."/>
            <person name="Fartmann B."/>
            <person name="Granderath K."/>
            <person name="Dauner D."/>
            <person name="Herzl A."/>
            <person name="Neumann S."/>
            <person name="Argiriou A."/>
            <person name="Vitale D."/>
            <person name="Liguori R."/>
            <person name="Piravandi E."/>
            <person name="Massenet O."/>
            <person name="Quigley F."/>
            <person name="Clabauld G."/>
            <person name="Muendlein A."/>
            <person name="Felber R."/>
            <person name="Schnabl S."/>
            <person name="Hiller R."/>
            <person name="Schmidt W."/>
            <person name="Lecharny A."/>
            <person name="Aubourg S."/>
            <person name="Chefdor F."/>
            <person name="Cooke R."/>
            <person name="Berger C."/>
            <person name="Monfort A."/>
            <person name="Casacuberta E."/>
            <person name="Gibbons T."/>
            <person name="Weber N."/>
            <person name="Vandenbol M."/>
            <person name="Bargues M."/>
            <person name="Terol J."/>
            <person name="Torres A."/>
            <person name="Perez-Perez A."/>
            <person name="Purnelle B."/>
            <person name="Bent E."/>
            <person name="Johnson S."/>
            <person name="Tacon D."/>
            <person name="Jesse T."/>
            <person name="Heijnen L."/>
            <person name="Schwarz S."/>
            <person name="Scholler P."/>
            <person name="Heber S."/>
            <person name="Francs P."/>
            <person name="Bielke C."/>
            <person name="Frishman D."/>
            <person name="Haase D."/>
            <person name="Lemcke K."/>
            <person name="Mewes H.-W."/>
            <person name="Stocker S."/>
            <person name="Zaccaria P."/>
            <person name="Bevan M."/>
            <person name="Wilson R.K."/>
            <person name="de la Bastide M."/>
            <person name="Habermann K."/>
            <person name="Parnell L."/>
            <person name="Dedhia N."/>
            <person name="Gnoj L."/>
            <person name="Schutz K."/>
            <person name="Huang E."/>
            <person name="Spiegel L."/>
            <person name="Sekhon M."/>
            <person name="Murray J."/>
            <person name="Sheet P."/>
            <person name="Cordes M."/>
            <person name="Abu-Threideh J."/>
            <person name="Stoneking T."/>
            <person name="Kalicki J."/>
            <person name="Graves T."/>
            <person name="Harmon G."/>
            <person name="Edwards J."/>
            <person name="Latreille P."/>
            <person name="Courtney L."/>
            <person name="Cloud J."/>
            <person name="Abbott A."/>
            <person name="Scott K."/>
            <person name="Johnson D."/>
            <person name="Minx P."/>
            <person name="Bentley D."/>
            <person name="Fulton B."/>
            <person name="Miller N."/>
            <person name="Greco T."/>
            <person name="Kemp K."/>
            <person name="Kramer J."/>
            <person name="Fulton L."/>
            <person name="Mardis E."/>
            <person name="Dante M."/>
            <person name="Pepin K."/>
            <person name="Hillier L.W."/>
            <person name="Nelson J."/>
            <person name="Spieth J."/>
            <person name="Ryan E."/>
            <person name="Andrews S."/>
            <person name="Geisel C."/>
            <person name="Layman D."/>
            <person name="Du H."/>
            <person name="Ali J."/>
            <person name="Berghoff A."/>
            <person name="Jones K."/>
            <person name="Drone K."/>
            <person name="Cotton M."/>
            <person name="Joshu C."/>
            <person name="Antonoiu B."/>
            <person name="Zidanic M."/>
            <person name="Strong C."/>
            <person name="Sun H."/>
            <person name="Lamar B."/>
            <person name="Yordan C."/>
            <person name="Ma P."/>
            <person name="Zhong J."/>
            <person name="Preston R."/>
            <person name="Vil D."/>
            <person name="Shekher M."/>
            <person name="Matero A."/>
            <person name="Shah R."/>
            <person name="Swaby I.K."/>
            <person name="O'Shaughnessy A."/>
            <person name="Rodriguez M."/>
            <person name="Hoffman J."/>
            <person name="Till S."/>
            <person name="Granat S."/>
            <person name="Shohdy N."/>
            <person name="Hasegawa A."/>
            <person name="Hameed A."/>
            <person name="Lodhi M."/>
            <person name="Johnson A."/>
            <person name="Chen E."/>
            <person name="Marra M.A."/>
            <person name="Martienssen R."/>
            <person name="McCombie W.R."/>
        </authorList>
    </citation>
    <scope>NUCLEOTIDE SEQUENCE [LARGE SCALE GENOMIC DNA]</scope>
    <source>
        <strain>cv. Columbia</strain>
    </source>
</reference>
<reference key="3">
    <citation type="journal article" date="2017" name="Plant J.">
        <title>Araport11: a complete reannotation of the Arabidopsis thaliana reference genome.</title>
        <authorList>
            <person name="Cheng C.Y."/>
            <person name="Krishnakumar V."/>
            <person name="Chan A.P."/>
            <person name="Thibaud-Nissen F."/>
            <person name="Schobel S."/>
            <person name="Town C.D."/>
        </authorList>
    </citation>
    <scope>GENOME REANNOTATION</scope>
    <source>
        <strain>cv. Columbia</strain>
    </source>
</reference>
<reference key="4">
    <citation type="journal article" date="2003" name="Science">
        <title>Empirical analysis of transcriptional activity in the Arabidopsis genome.</title>
        <authorList>
            <person name="Yamada K."/>
            <person name="Lim J."/>
            <person name="Dale J.M."/>
            <person name="Chen H."/>
            <person name="Shinn P."/>
            <person name="Palm C.J."/>
            <person name="Southwick A.M."/>
            <person name="Wu H.C."/>
            <person name="Kim C.J."/>
            <person name="Nguyen M."/>
            <person name="Pham P.K."/>
            <person name="Cheuk R.F."/>
            <person name="Karlin-Newmann G."/>
            <person name="Liu S.X."/>
            <person name="Lam B."/>
            <person name="Sakano H."/>
            <person name="Wu T."/>
            <person name="Yu G."/>
            <person name="Miranda M."/>
            <person name="Quach H.L."/>
            <person name="Tripp M."/>
            <person name="Chang C.H."/>
            <person name="Lee J.M."/>
            <person name="Toriumi M.J."/>
            <person name="Chan M.M."/>
            <person name="Tang C.C."/>
            <person name="Onodera C.S."/>
            <person name="Deng J.M."/>
            <person name="Akiyama K."/>
            <person name="Ansari Y."/>
            <person name="Arakawa T."/>
            <person name="Banh J."/>
            <person name="Banno F."/>
            <person name="Bowser L."/>
            <person name="Brooks S.Y."/>
            <person name="Carninci P."/>
            <person name="Chao Q."/>
            <person name="Choy N."/>
            <person name="Enju A."/>
            <person name="Goldsmith A.D."/>
            <person name="Gurjal M."/>
            <person name="Hansen N.F."/>
            <person name="Hayashizaki Y."/>
            <person name="Johnson-Hopson C."/>
            <person name="Hsuan V.W."/>
            <person name="Iida K."/>
            <person name="Karnes M."/>
            <person name="Khan S."/>
            <person name="Koesema E."/>
            <person name="Ishida J."/>
            <person name="Jiang P.X."/>
            <person name="Jones T."/>
            <person name="Kawai J."/>
            <person name="Kamiya A."/>
            <person name="Meyers C."/>
            <person name="Nakajima M."/>
            <person name="Narusaka M."/>
            <person name="Seki M."/>
            <person name="Sakurai T."/>
            <person name="Satou M."/>
            <person name="Tamse R."/>
            <person name="Vaysberg M."/>
            <person name="Wallender E.K."/>
            <person name="Wong C."/>
            <person name="Yamamura Y."/>
            <person name="Yuan S."/>
            <person name="Shinozaki K."/>
            <person name="Davis R.W."/>
            <person name="Theologis A."/>
            <person name="Ecker J.R."/>
        </authorList>
    </citation>
    <scope>NUCLEOTIDE SEQUENCE [LARGE SCALE MRNA]</scope>
    <source>
        <strain>cv. Columbia</strain>
    </source>
</reference>
<reference key="5">
    <citation type="submission" date="2002-03" db="EMBL/GenBank/DDBJ databases">
        <title>Full-length cDNA from Arabidopsis thaliana.</title>
        <authorList>
            <person name="Brover V.V."/>
            <person name="Troukhan M.E."/>
            <person name="Alexandrov N.A."/>
            <person name="Lu Y.-P."/>
            <person name="Flavell R.B."/>
            <person name="Feldmann K.A."/>
        </authorList>
    </citation>
    <scope>NUCLEOTIDE SEQUENCE [LARGE SCALE MRNA]</scope>
</reference>
<reference key="6">
    <citation type="journal article" date="2000" name="Trends Plant Sci.">
        <title>F-box proteins in Arabidopsis.</title>
        <authorList>
            <person name="Xiao W."/>
            <person name="Jang J.-C."/>
        </authorList>
    </citation>
    <scope>GENE FAMILY</scope>
    <scope>NOMENCLATURE</scope>
</reference>